<gene>
    <name type="primary">Grip1</name>
</gene>
<reference key="1">
    <citation type="journal article" date="1997" name="Nature">
        <title>GRIP: a synaptic PDZ domain-containing protein that interacts with AMPA receptors.</title>
        <authorList>
            <person name="Dong H."/>
            <person name="O'Brien R.J."/>
            <person name="Fung E.T."/>
            <person name="Lanahan A.A."/>
            <person name="Worley P.F."/>
            <person name="Huganir R.L."/>
        </authorList>
    </citation>
    <scope>NUCLEOTIDE SEQUENCE [MRNA] (ISOFORM 1)</scope>
    <scope>INTERACTION WITH GRIA2 AND GRIA3</scope>
    <scope>TISSUE SPECIFICITY</scope>
    <scope>FUNCTION</scope>
    <source>
        <tissue>Hippocampus</tissue>
    </source>
</reference>
<reference key="2">
    <citation type="journal article" date="2004" name="J. Biol. Chem.">
        <title>A four PDZ domain-containing splice variant form of GRIP1 is localized in GABAergic and glutamatergic synapses in the brain.</title>
        <authorList>
            <person name="Charych E.I."/>
            <person name="Yu W."/>
            <person name="Li R."/>
            <person name="Serwanski D.R."/>
            <person name="Miralles C.P."/>
            <person name="Li X."/>
            <person name="Yang B.Y."/>
            <person name="Pinal N."/>
            <person name="Walikonis R."/>
            <person name="De Blas A.L."/>
        </authorList>
    </citation>
    <scope>NUCLEOTIDE SEQUENCE [MRNA] (ISOFORM 2)</scope>
    <scope>SUBCELLULAR LOCATION</scope>
    <scope>INTERACTION WITH GRIA2 AND GRIA3</scope>
    <source>
        <strain>Sprague-Dawley</strain>
        <tissue>Brain</tissue>
    </source>
</reference>
<reference key="3">
    <citation type="journal article" date="1999" name="J. Neurosci.">
        <title>Characterization of the glutamate receptor-interacting proteins GRIP1 and GRIP2.</title>
        <authorList>
            <person name="Dong H."/>
            <person name="Zhang P."/>
            <person name="Song I."/>
            <person name="Petralia R.S."/>
            <person name="Liao D."/>
            <person name="Huganir R.L."/>
        </authorList>
    </citation>
    <scope>SUBUNIT</scope>
    <scope>INTERACTION WITH GRIA2</scope>
    <scope>TISSUE SPECIFICITY</scope>
    <scope>DEVELOPMENTAL STAGE</scope>
    <scope>SUBCELLULAR LOCATION</scope>
</reference>
<reference key="4">
    <citation type="journal article" date="2000" name="Neuron">
        <title>GRASP-1: a neuronal RasGEF associated with the AMPA receptor/GRIP complex.</title>
        <authorList>
            <person name="Ye B."/>
            <person name="Liao D."/>
            <person name="Zhang X."/>
            <person name="Zhang P."/>
            <person name="Dong H."/>
            <person name="Huganir R.L."/>
        </authorList>
    </citation>
    <scope>INTERACTION WITH GRIPAP1</scope>
</reference>
<reference key="5">
    <citation type="journal article" date="2002" name="Neuron">
        <title>Interaction between GRIP and liprin-alpha/SYD2 is required for AMPA receptor targeting.</title>
        <authorList>
            <person name="Wyszynski M."/>
            <person name="Kim E."/>
            <person name="Dunah A.W."/>
            <person name="Passafaro M."/>
            <person name="Valtschanoff J.G."/>
            <person name="Serra-Pages C."/>
            <person name="Streuli M."/>
            <person name="Weinberg R.J."/>
            <person name="Sheng M."/>
        </authorList>
    </citation>
    <scope>INTERACTION WITH PPFIA1; PPFIA4; PTPRF AND LIPRINS-ALPHA</scope>
</reference>
<reference key="6">
    <citation type="journal article" date="2002" name="J. Comp. Neurol.">
        <title>Association of the AMPA receptor-related postsynaptic density proteins GRIP and ABP with subsets of glutamate-sensitive neurons in the rat retina.</title>
        <authorList>
            <person name="Gabriel R."/>
            <person name="de Souza S."/>
            <person name="Ziff E.B."/>
            <person name="Witkovsky P."/>
        </authorList>
    </citation>
    <scope>TISSUE SPECIFICITY</scope>
</reference>
<reference key="7">
    <citation type="journal article" date="2005" name="EMBO J.">
        <title>Interactions between NEEP21, GRIP1 and GluR2 regulate sorting and recycling of the glutamate receptor subunit GluR2.</title>
        <authorList>
            <person name="Steiner P."/>
            <person name="Alberi S."/>
            <person name="Kulangara K."/>
            <person name="Yersin A."/>
            <person name="Sarria J.C."/>
            <person name="Regulier E."/>
            <person name="Kasas S."/>
            <person name="Dietler G."/>
            <person name="Muller D."/>
            <person name="Catsicas S."/>
            <person name="Hirling H."/>
        </authorList>
    </citation>
    <scope>INTERACTION WITH NSG1</scope>
    <scope>COMPLEX FORMATION WITH NSG1; GRIA2 AND STX12</scope>
    <scope>FUNCTION</scope>
</reference>
<reference key="8">
    <citation type="journal article" date="2011" name="Cell">
        <title>The AAA+ ATPase Thorase regulates AMPA receptor-dependent synaptic plasticity and behavior.</title>
        <authorList>
            <person name="Zhang J."/>
            <person name="Wang Y."/>
            <person name="Chi Z."/>
            <person name="Keuss M.J."/>
            <person name="Pai Y.M."/>
            <person name="Kang H.C."/>
            <person name="Shin J.H."/>
            <person name="Bugayenko A."/>
            <person name="Wang H."/>
            <person name="Xiong Y."/>
            <person name="Pletnikov M.V."/>
            <person name="Mattson M.P."/>
            <person name="Dawson T.M."/>
            <person name="Dawson V.L."/>
        </authorList>
    </citation>
    <scope>INTERACTION WITH ATAD1 AND GRIA2</scope>
</reference>
<reference key="9">
    <citation type="journal article" date="2012" name="Nat. Commun.">
        <title>Quantitative maps of protein phosphorylation sites across 14 different rat organs and tissues.</title>
        <authorList>
            <person name="Lundby A."/>
            <person name="Secher A."/>
            <person name="Lage K."/>
            <person name="Nordsborg N.B."/>
            <person name="Dmytriyev A."/>
            <person name="Lundby C."/>
            <person name="Olsen J.V."/>
        </authorList>
    </citation>
    <scope>PHOSPHORYLATION [LARGE SCALE ANALYSIS] AT SER-43</scope>
    <scope>IDENTIFICATION BY MASS SPECTROMETRY [LARGE SCALE ANALYSIS]</scope>
</reference>
<reference key="10">
    <citation type="journal article" date="2002" name="J. Biol. Chem.">
        <title>PDZ7 of glutamate receptor interacting protein binds to its target via a novel hydrophobic surface area.</title>
        <authorList>
            <person name="Feng W."/>
            <person name="Fan J.-S."/>
            <person name="Jiang M."/>
            <person name="Shi Y.-W."/>
            <person name="Zhang M."/>
        </authorList>
    </citation>
    <scope>STRUCTURE BY NMR OF 980-1070</scope>
    <scope>INTERACTION WITH GRASP1</scope>
</reference>
<reference key="11">
    <citation type="journal article" date="2003" name="J. Biol. Chem.">
        <title>The proteoglycan NG2 is complexed with alpha-amino-3-hydroxy-5-methyl-4-isoxazolepropionic acid (AMPA) receptors by the PDZ glutamate receptor interaction protein (GRIP) in glial progenitor cells. Implications for glial-neuronal signaling.</title>
        <authorList>
            <person name="Stegmueller J."/>
            <person name="Werner H."/>
            <person name="Nave K.-A."/>
            <person name="Trotter J."/>
        </authorList>
    </citation>
    <scope>INTERACTION WITH CSPG4</scope>
    <scope>DOMAIN</scope>
</reference>
<reference key="12">
    <citation type="journal article" date="2004" name="Nat. Genet.">
        <title>A direct functional link between the multi-PDZ domain protein GRIP1 and the Fraser syndrome protein Fras1.</title>
        <authorList>
            <person name="Takamiya K."/>
            <person name="Kostourou V."/>
            <person name="Adams S."/>
            <person name="Jadeja S."/>
            <person name="Chalepakis G."/>
            <person name="Scambler P.J."/>
            <person name="Huganir R.L."/>
            <person name="Adams R.H."/>
        </authorList>
    </citation>
    <scope>INTERACTION WITH FRAS1</scope>
</reference>
<organism>
    <name type="scientific">Rattus norvegicus</name>
    <name type="common">Rat</name>
    <dbReference type="NCBI Taxonomy" id="10116"/>
    <lineage>
        <taxon>Eukaryota</taxon>
        <taxon>Metazoa</taxon>
        <taxon>Chordata</taxon>
        <taxon>Craniata</taxon>
        <taxon>Vertebrata</taxon>
        <taxon>Euteleostomi</taxon>
        <taxon>Mammalia</taxon>
        <taxon>Eutheria</taxon>
        <taxon>Euarchontoglires</taxon>
        <taxon>Glires</taxon>
        <taxon>Rodentia</taxon>
        <taxon>Myomorpha</taxon>
        <taxon>Muroidea</taxon>
        <taxon>Muridae</taxon>
        <taxon>Murinae</taxon>
        <taxon>Rattus</taxon>
    </lineage>
</organism>
<feature type="chain" id="PRO_0000083851" description="Glutamate receptor-interacting protein 1">
    <location>
        <begin position="1"/>
        <end position="1112"/>
    </location>
</feature>
<feature type="domain" description="PDZ 1" evidence="2">
    <location>
        <begin position="53"/>
        <end position="136"/>
    </location>
</feature>
<feature type="domain" description="PDZ 2" evidence="2">
    <location>
        <begin position="150"/>
        <end position="238"/>
    </location>
</feature>
<feature type="domain" description="PDZ 3" evidence="2">
    <location>
        <begin position="252"/>
        <end position="336"/>
    </location>
</feature>
<feature type="domain" description="PDZ 4" evidence="2">
    <location>
        <begin position="471"/>
        <end position="560"/>
    </location>
</feature>
<feature type="domain" description="PDZ 5" evidence="2">
    <location>
        <begin position="572"/>
        <end position="657"/>
    </location>
</feature>
<feature type="domain" description="PDZ 6" evidence="2">
    <location>
        <begin position="672"/>
        <end position="754"/>
    </location>
</feature>
<feature type="domain" description="PDZ 7" evidence="2">
    <location>
        <begin position="988"/>
        <end position="1070"/>
    </location>
</feature>
<feature type="region of interest" description="Disordered" evidence="3">
    <location>
        <begin position="752"/>
        <end position="796"/>
    </location>
</feature>
<feature type="region of interest" description="Disordered" evidence="3">
    <location>
        <begin position="841"/>
        <end position="886"/>
    </location>
</feature>
<feature type="region of interest" description="Disordered" evidence="3">
    <location>
        <begin position="922"/>
        <end position="963"/>
    </location>
</feature>
<feature type="region of interest" description="Disordered" evidence="3">
    <location>
        <begin position="1077"/>
        <end position="1112"/>
    </location>
</feature>
<feature type="compositionally biased region" description="Low complexity" evidence="3">
    <location>
        <begin position="869"/>
        <end position="880"/>
    </location>
</feature>
<feature type="compositionally biased region" description="Polar residues" evidence="3">
    <location>
        <begin position="928"/>
        <end position="958"/>
    </location>
</feature>
<feature type="compositionally biased region" description="Polar residues" evidence="3">
    <location>
        <begin position="1086"/>
        <end position="1099"/>
    </location>
</feature>
<feature type="modified residue" description="Phosphoserine" evidence="13">
    <location>
        <position position="43"/>
    </location>
</feature>
<feature type="splice variant" id="VSP_009751" description="In isoform 2." evidence="10">
    <location>
        <begin position="1"/>
        <end position="416"/>
    </location>
</feature>
<feature type="splice variant" id="VSP_009752" description="In isoform 2." evidence="10">
    <original>SSLNMGTLPRSLYSTSPRGTMMRRRLKKKDFKSSL</original>
    <variation>MTPKRTEKEMKKPHNFHHASHPPLRKGQKINAAHV</variation>
    <location>
        <begin position="417"/>
        <end position="451"/>
    </location>
</feature>
<feature type="splice variant" id="VSP_009753" description="In isoform 2." evidence="10">
    <original>GNLETREPTNTL</original>
    <variation>IPGDAVYFWQS</variation>
    <location>
        <begin position="1101"/>
        <end position="1112"/>
    </location>
</feature>
<feature type="sequence conflict" description="In Ref. 2; AAR08916." evidence="11" ref="2">
    <original>R</original>
    <variation>S</variation>
    <location>
        <position position="816"/>
    </location>
</feature>
<feature type="sequence conflict" description="In Ref. 2; AAR08916." evidence="11" ref="2">
    <original>K</original>
    <variation>Q</variation>
    <location>
        <position position="841"/>
    </location>
</feature>
<feature type="strand" evidence="17">
    <location>
        <begin position="49"/>
        <end position="57"/>
    </location>
</feature>
<feature type="strand" evidence="17">
    <location>
        <begin position="66"/>
        <end position="69"/>
    </location>
</feature>
<feature type="strand" evidence="17">
    <location>
        <begin position="74"/>
        <end position="76"/>
    </location>
</feature>
<feature type="strand" evidence="17">
    <location>
        <begin position="78"/>
        <end position="83"/>
    </location>
</feature>
<feature type="helix" evidence="17">
    <location>
        <begin position="88"/>
        <end position="91"/>
    </location>
</feature>
<feature type="strand" evidence="17">
    <location>
        <begin position="100"/>
        <end position="104"/>
    </location>
</feature>
<feature type="helix" evidence="17">
    <location>
        <begin position="114"/>
        <end position="122"/>
    </location>
</feature>
<feature type="strand" evidence="17">
    <location>
        <begin position="126"/>
        <end position="135"/>
    </location>
</feature>
<feature type="strand" evidence="17">
    <location>
        <begin position="144"/>
        <end position="156"/>
    </location>
</feature>
<feature type="strand" evidence="17">
    <location>
        <begin position="163"/>
        <end position="169"/>
    </location>
</feature>
<feature type="turn" evidence="17">
    <location>
        <begin position="174"/>
        <end position="176"/>
    </location>
</feature>
<feature type="strand" evidence="17">
    <location>
        <begin position="178"/>
        <end position="185"/>
    </location>
</feature>
<feature type="helix" evidence="17">
    <location>
        <begin position="190"/>
        <end position="194"/>
    </location>
</feature>
<feature type="strand" evidence="17">
    <location>
        <begin position="202"/>
        <end position="206"/>
    </location>
</feature>
<feature type="helix" evidence="17">
    <location>
        <begin position="216"/>
        <end position="224"/>
    </location>
</feature>
<feature type="strand" evidence="17">
    <location>
        <begin position="228"/>
        <end position="239"/>
    </location>
</feature>
<feature type="strand" evidence="16">
    <location>
        <begin position="468"/>
        <end position="475"/>
    </location>
</feature>
<feature type="turn" evidence="16">
    <location>
        <begin position="478"/>
        <end position="480"/>
    </location>
</feature>
<feature type="strand" evidence="16">
    <location>
        <begin position="485"/>
        <end position="488"/>
    </location>
</feature>
<feature type="strand" evidence="16">
    <location>
        <begin position="493"/>
        <end position="495"/>
    </location>
</feature>
<feature type="strand" evidence="16">
    <location>
        <begin position="499"/>
        <end position="504"/>
    </location>
</feature>
<feature type="helix" evidence="16">
    <location>
        <begin position="510"/>
        <end position="513"/>
    </location>
</feature>
<feature type="strand" evidence="16">
    <location>
        <begin position="523"/>
        <end position="526"/>
    </location>
</feature>
<feature type="helix" evidence="16">
    <location>
        <begin position="536"/>
        <end position="544"/>
    </location>
</feature>
<feature type="strand" evidence="16">
    <location>
        <begin position="548"/>
        <end position="558"/>
    </location>
</feature>
<feature type="strand" evidence="16">
    <location>
        <begin position="571"/>
        <end position="575"/>
    </location>
</feature>
<feature type="strand" evidence="16">
    <location>
        <begin position="586"/>
        <end position="588"/>
    </location>
</feature>
<feature type="strand" evidence="16">
    <location>
        <begin position="592"/>
        <end position="594"/>
    </location>
</feature>
<feature type="strand" evidence="16">
    <location>
        <begin position="600"/>
        <end position="603"/>
    </location>
</feature>
<feature type="strand" evidence="16">
    <location>
        <begin position="606"/>
        <end position="608"/>
    </location>
</feature>
<feature type="helix" evidence="16">
    <location>
        <begin position="609"/>
        <end position="612"/>
    </location>
</feature>
<feature type="strand" evidence="16">
    <location>
        <begin position="621"/>
        <end position="625"/>
    </location>
</feature>
<feature type="helix" evidence="16">
    <location>
        <begin position="630"/>
        <end position="632"/>
    </location>
</feature>
<feature type="helix" evidence="16">
    <location>
        <begin position="635"/>
        <end position="644"/>
    </location>
</feature>
<feature type="strand" evidence="16">
    <location>
        <begin position="649"/>
        <end position="654"/>
    </location>
</feature>
<feature type="strand" evidence="15">
    <location>
        <begin position="670"/>
        <end position="676"/>
    </location>
</feature>
<feature type="strand" evidence="15">
    <location>
        <begin position="684"/>
        <end position="687"/>
    </location>
</feature>
<feature type="strand" evidence="15">
    <location>
        <begin position="697"/>
        <end position="701"/>
    </location>
</feature>
<feature type="helix" evidence="15">
    <location>
        <begin position="706"/>
        <end position="710"/>
    </location>
</feature>
<feature type="strand" evidence="15">
    <location>
        <begin position="718"/>
        <end position="722"/>
    </location>
</feature>
<feature type="helix" evidence="15">
    <location>
        <begin position="732"/>
        <end position="740"/>
    </location>
</feature>
<feature type="strand" evidence="15">
    <location>
        <begin position="744"/>
        <end position="751"/>
    </location>
</feature>
<feature type="strand" evidence="14">
    <location>
        <begin position="985"/>
        <end position="992"/>
    </location>
</feature>
<feature type="strand" evidence="14">
    <location>
        <begin position="998"/>
        <end position="1006"/>
    </location>
</feature>
<feature type="strand" evidence="14">
    <location>
        <begin position="1013"/>
        <end position="1018"/>
    </location>
</feature>
<feature type="helix" evidence="14">
    <location>
        <begin position="1023"/>
        <end position="1027"/>
    </location>
</feature>
<feature type="strand" evidence="14">
    <location>
        <begin position="1034"/>
        <end position="1038"/>
    </location>
</feature>
<feature type="helix" evidence="14">
    <location>
        <begin position="1048"/>
        <end position="1056"/>
    </location>
</feature>
<feature type="strand" evidence="14">
    <location>
        <begin position="1061"/>
        <end position="1068"/>
    </location>
</feature>
<proteinExistence type="evidence at protein level"/>
<dbReference type="EMBL" id="U88572">
    <property type="protein sequence ID" value="AAB51689.1"/>
    <property type="molecule type" value="mRNA"/>
</dbReference>
<dbReference type="EMBL" id="AY437398">
    <property type="protein sequence ID" value="AAR08916.1"/>
    <property type="molecule type" value="mRNA"/>
</dbReference>
<dbReference type="PIR" id="T32733">
    <property type="entry name" value="T32733"/>
</dbReference>
<dbReference type="RefSeq" id="NP_114458.1">
    <molecule id="P97879-1"/>
    <property type="nucleotide sequence ID" value="NM_032069.1"/>
</dbReference>
<dbReference type="PDB" id="1M5Z">
    <property type="method" value="NMR"/>
    <property type="chains" value="A=980-1070"/>
</dbReference>
<dbReference type="PDB" id="1N7E">
    <property type="method" value="X-ray"/>
    <property type="resolution" value="1.50 A"/>
    <property type="chains" value="A=665-761"/>
</dbReference>
<dbReference type="PDB" id="1N7F">
    <property type="method" value="X-ray"/>
    <property type="resolution" value="1.80 A"/>
    <property type="chains" value="A/B=665-761"/>
</dbReference>
<dbReference type="PDB" id="1P1D">
    <property type="method" value="NMR"/>
    <property type="chains" value="A=463-658"/>
</dbReference>
<dbReference type="PDB" id="1P1E">
    <property type="method" value="NMR"/>
    <property type="chains" value="A=463-563"/>
</dbReference>
<dbReference type="PDB" id="2QT5">
    <property type="method" value="X-ray"/>
    <property type="resolution" value="2.30 A"/>
    <property type="chains" value="A/B=48-243"/>
</dbReference>
<dbReference type="PDBsum" id="1M5Z"/>
<dbReference type="PDBsum" id="1N7E"/>
<dbReference type="PDBsum" id="1N7F"/>
<dbReference type="PDBsum" id="1P1D"/>
<dbReference type="PDBsum" id="1P1E"/>
<dbReference type="PDBsum" id="2QT5"/>
<dbReference type="SMR" id="P97879"/>
<dbReference type="BioGRID" id="249882">
    <property type="interactions" value="14"/>
</dbReference>
<dbReference type="CORUM" id="P97879"/>
<dbReference type="DIP" id="DIP-37486N"/>
<dbReference type="ELM" id="P97879"/>
<dbReference type="FunCoup" id="P97879">
    <property type="interactions" value="1407"/>
</dbReference>
<dbReference type="IntAct" id="P97879">
    <property type="interactions" value="34"/>
</dbReference>
<dbReference type="MINT" id="P97879"/>
<dbReference type="STRING" id="10116.ENSRNOP00000005539"/>
<dbReference type="BindingDB" id="P97879"/>
<dbReference type="ChEMBL" id="CHEMBL2366484"/>
<dbReference type="iPTMnet" id="P97879"/>
<dbReference type="PhosphoSitePlus" id="P97879"/>
<dbReference type="SwissPalm" id="P97879"/>
<dbReference type="PaxDb" id="10116-ENSRNOP00000005539"/>
<dbReference type="GeneID" id="84016"/>
<dbReference type="KEGG" id="rno:84016"/>
<dbReference type="AGR" id="RGD:621667"/>
<dbReference type="CTD" id="23426"/>
<dbReference type="RGD" id="621667">
    <property type="gene designation" value="Grip1"/>
</dbReference>
<dbReference type="eggNOG" id="KOG3528">
    <property type="taxonomic scope" value="Eukaryota"/>
</dbReference>
<dbReference type="InParanoid" id="P97879"/>
<dbReference type="PhylomeDB" id="P97879"/>
<dbReference type="Reactome" id="R-RNO-416993">
    <property type="pathway name" value="Trafficking of GluR2-containing AMPA receptors"/>
</dbReference>
<dbReference type="EvolutionaryTrace" id="P97879"/>
<dbReference type="PRO" id="PR:P97879"/>
<dbReference type="Proteomes" id="UP000002494">
    <property type="component" value="Unplaced"/>
</dbReference>
<dbReference type="GO" id="GO:0030425">
    <property type="term" value="C:dendrite"/>
    <property type="evidence" value="ECO:0000314"/>
    <property type="project" value="RGD"/>
</dbReference>
<dbReference type="GO" id="GO:0043198">
    <property type="term" value="C:dendritic shaft"/>
    <property type="evidence" value="ECO:0000314"/>
    <property type="project" value="RGD"/>
</dbReference>
<dbReference type="GO" id="GO:0043197">
    <property type="term" value="C:dendritic spine"/>
    <property type="evidence" value="ECO:0000314"/>
    <property type="project" value="RGD"/>
</dbReference>
<dbReference type="GO" id="GO:0044327">
    <property type="term" value="C:dendritic spine head"/>
    <property type="evidence" value="ECO:0000314"/>
    <property type="project" value="RGD"/>
</dbReference>
<dbReference type="GO" id="GO:0044326">
    <property type="term" value="C:dendritic spine neck"/>
    <property type="evidence" value="ECO:0000314"/>
    <property type="project" value="RGD"/>
</dbReference>
<dbReference type="GO" id="GO:0005789">
    <property type="term" value="C:endoplasmic reticulum membrane"/>
    <property type="evidence" value="ECO:0007669"/>
    <property type="project" value="UniProtKB-SubCell"/>
</dbReference>
<dbReference type="GO" id="GO:0000145">
    <property type="term" value="C:exocyst"/>
    <property type="evidence" value="ECO:0000314"/>
    <property type="project" value="RGD"/>
</dbReference>
<dbReference type="GO" id="GO:0098982">
    <property type="term" value="C:GABA-ergic synapse"/>
    <property type="evidence" value="ECO:0000314"/>
    <property type="project" value="RGD"/>
</dbReference>
<dbReference type="GO" id="GO:0098978">
    <property type="term" value="C:glutamatergic synapse"/>
    <property type="evidence" value="ECO:0000314"/>
    <property type="project" value="RGD"/>
</dbReference>
<dbReference type="GO" id="GO:0045121">
    <property type="term" value="C:membrane raft"/>
    <property type="evidence" value="ECO:0000266"/>
    <property type="project" value="RGD"/>
</dbReference>
<dbReference type="GO" id="GO:0005874">
    <property type="term" value="C:microtubule"/>
    <property type="evidence" value="ECO:0000314"/>
    <property type="project" value="RGD"/>
</dbReference>
<dbReference type="GO" id="GO:0043005">
    <property type="term" value="C:neuron projection"/>
    <property type="evidence" value="ECO:0000266"/>
    <property type="project" value="RGD"/>
</dbReference>
<dbReference type="GO" id="GO:0043025">
    <property type="term" value="C:neuronal cell body"/>
    <property type="evidence" value="ECO:0000314"/>
    <property type="project" value="UniProtKB"/>
</dbReference>
<dbReference type="GO" id="GO:0043204">
    <property type="term" value="C:perikaryon"/>
    <property type="evidence" value="ECO:0007669"/>
    <property type="project" value="UniProtKB-SubCell"/>
</dbReference>
<dbReference type="GO" id="GO:0048471">
    <property type="term" value="C:perinuclear region of cytoplasm"/>
    <property type="evidence" value="ECO:0000314"/>
    <property type="project" value="RGD"/>
</dbReference>
<dbReference type="GO" id="GO:0005886">
    <property type="term" value="C:plasma membrane"/>
    <property type="evidence" value="ECO:0000266"/>
    <property type="project" value="RGD"/>
</dbReference>
<dbReference type="GO" id="GO:0098794">
    <property type="term" value="C:postsynapse"/>
    <property type="evidence" value="ECO:0000314"/>
    <property type="project" value="RGD"/>
</dbReference>
<dbReference type="GO" id="GO:0014069">
    <property type="term" value="C:postsynaptic density"/>
    <property type="evidence" value="ECO:0000314"/>
    <property type="project" value="SynGO"/>
</dbReference>
<dbReference type="GO" id="GO:0045211">
    <property type="term" value="C:postsynaptic membrane"/>
    <property type="evidence" value="ECO:0000314"/>
    <property type="project" value="RGD"/>
</dbReference>
<dbReference type="GO" id="GO:0098793">
    <property type="term" value="C:presynapse"/>
    <property type="evidence" value="ECO:0000314"/>
    <property type="project" value="RGD"/>
</dbReference>
<dbReference type="GO" id="GO:0048786">
    <property type="term" value="C:presynaptic active zone"/>
    <property type="evidence" value="ECO:0000314"/>
    <property type="project" value="RGD"/>
</dbReference>
<dbReference type="GO" id="GO:0042734">
    <property type="term" value="C:presynaptic membrane"/>
    <property type="evidence" value="ECO:0000314"/>
    <property type="project" value="RGD"/>
</dbReference>
<dbReference type="GO" id="GO:1990635">
    <property type="term" value="C:proximal dendrite"/>
    <property type="evidence" value="ECO:0000314"/>
    <property type="project" value="RGD"/>
</dbReference>
<dbReference type="GO" id="GO:0055037">
    <property type="term" value="C:recycling endosome"/>
    <property type="evidence" value="ECO:0000314"/>
    <property type="project" value="RGD"/>
</dbReference>
<dbReference type="GO" id="GO:0106033">
    <property type="term" value="C:spine synapse"/>
    <property type="evidence" value="ECO:0000314"/>
    <property type="project" value="RGD"/>
</dbReference>
<dbReference type="GO" id="GO:0043083">
    <property type="term" value="C:synaptic cleft"/>
    <property type="evidence" value="ECO:0000314"/>
    <property type="project" value="RGD"/>
</dbReference>
<dbReference type="GO" id="GO:0097060">
    <property type="term" value="C:synaptic membrane"/>
    <property type="evidence" value="ECO:0000314"/>
    <property type="project" value="RGD"/>
</dbReference>
<dbReference type="GO" id="GO:0043195">
    <property type="term" value="C:terminal bouton"/>
    <property type="evidence" value="ECO:0000314"/>
    <property type="project" value="RGD"/>
</dbReference>
<dbReference type="GO" id="GO:0051020">
    <property type="term" value="F:GTPase binding"/>
    <property type="evidence" value="ECO:0000353"/>
    <property type="project" value="RGD"/>
</dbReference>
<dbReference type="GO" id="GO:0035255">
    <property type="term" value="F:ionotropic glutamate receptor binding"/>
    <property type="evidence" value="ECO:0000314"/>
    <property type="project" value="RGD"/>
</dbReference>
<dbReference type="GO" id="GO:0030165">
    <property type="term" value="F:PDZ domain binding"/>
    <property type="evidence" value="ECO:0000353"/>
    <property type="project" value="RGD"/>
</dbReference>
<dbReference type="GO" id="GO:0005102">
    <property type="term" value="F:signaling receptor binding"/>
    <property type="evidence" value="ECO:0000353"/>
    <property type="project" value="RGD"/>
</dbReference>
<dbReference type="GO" id="GO:1990416">
    <property type="term" value="P:cellular response to brain-derived neurotrophic factor stimulus"/>
    <property type="evidence" value="ECO:0000314"/>
    <property type="project" value="RGD"/>
</dbReference>
<dbReference type="GO" id="GO:1904628">
    <property type="term" value="P:cellular response to phorbol 13-acetate 12-myristate"/>
    <property type="evidence" value="ECO:0000314"/>
    <property type="project" value="RGD"/>
</dbReference>
<dbReference type="GO" id="GO:0021987">
    <property type="term" value="P:cerebral cortex development"/>
    <property type="evidence" value="ECO:0000270"/>
    <property type="project" value="RGD"/>
</dbReference>
<dbReference type="GO" id="GO:0140059">
    <property type="term" value="P:dendrite arborization"/>
    <property type="evidence" value="ECO:0000315"/>
    <property type="project" value="RGD"/>
</dbReference>
<dbReference type="GO" id="GO:0007399">
    <property type="term" value="P:nervous system development"/>
    <property type="evidence" value="ECO:0000315"/>
    <property type="project" value="RGD"/>
</dbReference>
<dbReference type="GO" id="GO:0098887">
    <property type="term" value="P:neurotransmitter receptor transport, endosome to postsynaptic membrane"/>
    <property type="evidence" value="ECO:0000266"/>
    <property type="project" value="RGD"/>
</dbReference>
<dbReference type="GO" id="GO:0050775">
    <property type="term" value="P:positive regulation of dendrite morphogenesis"/>
    <property type="evidence" value="ECO:0000315"/>
    <property type="project" value="RGD"/>
</dbReference>
<dbReference type="GO" id="GO:0150012">
    <property type="term" value="P:positive regulation of neuron projection arborization"/>
    <property type="evidence" value="ECO:0000315"/>
    <property type="project" value="RGD"/>
</dbReference>
<dbReference type="GO" id="GO:1903078">
    <property type="term" value="P:positive regulation of protein localization to plasma membrane"/>
    <property type="evidence" value="ECO:0000314"/>
    <property type="project" value="RGD"/>
</dbReference>
<dbReference type="GO" id="GO:0008104">
    <property type="term" value="P:protein localization"/>
    <property type="evidence" value="ECO:0000266"/>
    <property type="project" value="RGD"/>
</dbReference>
<dbReference type="GO" id="GO:0150092">
    <property type="term" value="P:regulation of synaptic scaling"/>
    <property type="evidence" value="ECO:0000315"/>
    <property type="project" value="RGD"/>
</dbReference>
<dbReference type="GO" id="GO:0099003">
    <property type="term" value="P:vesicle-mediated transport in synapse"/>
    <property type="evidence" value="ECO:0000266"/>
    <property type="project" value="RGD"/>
</dbReference>
<dbReference type="CDD" id="cd06687">
    <property type="entry name" value="PDZ1_GRIP1-2-like"/>
    <property type="match status" value="1"/>
</dbReference>
<dbReference type="CDD" id="cd06681">
    <property type="entry name" value="PDZ2_GRIP1-2-like"/>
    <property type="match status" value="1"/>
</dbReference>
<dbReference type="CDD" id="cd06684">
    <property type="entry name" value="PDZ3_GRIP1-2-like"/>
    <property type="match status" value="1"/>
</dbReference>
<dbReference type="CDD" id="cd06686">
    <property type="entry name" value="PDZ4_GRIP1-2-like"/>
    <property type="match status" value="1"/>
</dbReference>
<dbReference type="CDD" id="cd06682">
    <property type="entry name" value="PDZ5_GRIP1-2-like"/>
    <property type="match status" value="1"/>
</dbReference>
<dbReference type="CDD" id="cd06683">
    <property type="entry name" value="PDZ6_GRIP1-2-like"/>
    <property type="match status" value="1"/>
</dbReference>
<dbReference type="CDD" id="cd06685">
    <property type="entry name" value="PDZ7_GRIP1-2-like"/>
    <property type="match status" value="1"/>
</dbReference>
<dbReference type="FunFam" id="2.30.42.10:FF:000021">
    <property type="entry name" value="Glutamate receptor interacting protein 1"/>
    <property type="match status" value="1"/>
</dbReference>
<dbReference type="FunFam" id="2.30.42.10:FF:000022">
    <property type="entry name" value="Glutamate receptor interacting protein 1"/>
    <property type="match status" value="1"/>
</dbReference>
<dbReference type="FunFam" id="2.30.42.10:FF:000023">
    <property type="entry name" value="Glutamate receptor interacting protein 1"/>
    <property type="match status" value="1"/>
</dbReference>
<dbReference type="FunFam" id="2.30.42.10:FF:000025">
    <property type="entry name" value="Glutamate receptor interacting protein 1"/>
    <property type="match status" value="1"/>
</dbReference>
<dbReference type="FunFam" id="2.30.42.10:FF:000031">
    <property type="entry name" value="Glutamate receptor interacting protein 1"/>
    <property type="match status" value="1"/>
</dbReference>
<dbReference type="FunFam" id="2.30.42.10:FF:000034">
    <property type="entry name" value="Glutamate receptor interacting protein 1"/>
    <property type="match status" value="1"/>
</dbReference>
<dbReference type="FunFam" id="2.30.42.10:FF:000035">
    <property type="entry name" value="Glutamate receptor interacting protein 1"/>
    <property type="match status" value="1"/>
</dbReference>
<dbReference type="Gene3D" id="2.30.42.10">
    <property type="match status" value="7"/>
</dbReference>
<dbReference type="InterPro" id="IPR043545">
    <property type="entry name" value="GRIP1/2"/>
</dbReference>
<dbReference type="InterPro" id="IPR001478">
    <property type="entry name" value="PDZ"/>
</dbReference>
<dbReference type="InterPro" id="IPR041489">
    <property type="entry name" value="PDZ_6"/>
</dbReference>
<dbReference type="InterPro" id="IPR036034">
    <property type="entry name" value="PDZ_sf"/>
</dbReference>
<dbReference type="PANTHER" id="PTHR46227:SF3">
    <property type="entry name" value="GLUTAMATE RECEPTOR-INTERACTING PROTEIN 1"/>
    <property type="match status" value="1"/>
</dbReference>
<dbReference type="PANTHER" id="PTHR46227">
    <property type="entry name" value="GLUTAMATE RECEPTOR-INTERACTING PROTEIN GRIP"/>
    <property type="match status" value="1"/>
</dbReference>
<dbReference type="Pfam" id="PF00595">
    <property type="entry name" value="PDZ"/>
    <property type="match status" value="6"/>
</dbReference>
<dbReference type="Pfam" id="PF17820">
    <property type="entry name" value="PDZ_6"/>
    <property type="match status" value="1"/>
</dbReference>
<dbReference type="SMART" id="SM00228">
    <property type="entry name" value="PDZ"/>
    <property type="match status" value="7"/>
</dbReference>
<dbReference type="SUPFAM" id="SSF50156">
    <property type="entry name" value="PDZ domain-like"/>
    <property type="match status" value="7"/>
</dbReference>
<dbReference type="PROSITE" id="PS50106">
    <property type="entry name" value="PDZ"/>
    <property type="match status" value="7"/>
</dbReference>
<evidence type="ECO:0000250" key="1"/>
<evidence type="ECO:0000255" key="2">
    <source>
        <dbReference type="PROSITE-ProRule" id="PRU00143"/>
    </source>
</evidence>
<evidence type="ECO:0000256" key="3">
    <source>
        <dbReference type="SAM" id="MobiDB-lite"/>
    </source>
</evidence>
<evidence type="ECO:0000269" key="4">
    <source>
    </source>
</evidence>
<evidence type="ECO:0000269" key="5">
    <source>
    </source>
</evidence>
<evidence type="ECO:0000269" key="6">
    <source>
    </source>
</evidence>
<evidence type="ECO:0000269" key="7">
    <source>
    </source>
</evidence>
<evidence type="ECO:0000269" key="8">
    <source>
    </source>
</evidence>
<evidence type="ECO:0000269" key="9">
    <source>
    </source>
</evidence>
<evidence type="ECO:0000303" key="10">
    <source>
    </source>
</evidence>
<evidence type="ECO:0000305" key="11"/>
<evidence type="ECO:0000305" key="12">
    <source>
    </source>
</evidence>
<evidence type="ECO:0007744" key="13">
    <source>
    </source>
</evidence>
<evidence type="ECO:0007829" key="14">
    <source>
        <dbReference type="PDB" id="1M5Z"/>
    </source>
</evidence>
<evidence type="ECO:0007829" key="15">
    <source>
        <dbReference type="PDB" id="1N7E"/>
    </source>
</evidence>
<evidence type="ECO:0007829" key="16">
    <source>
        <dbReference type="PDB" id="1P1D"/>
    </source>
</evidence>
<evidence type="ECO:0007829" key="17">
    <source>
        <dbReference type="PDB" id="2QT5"/>
    </source>
</evidence>
<sequence length="1112" mass="120298">MIAVSFKCRCQILRRLTKDESPYTKSASQTKPPDGALAVRRQSIPEEFKGSTVVELMKKEGTTLGLTVSGGIDKDGKPRVSNLRQGGIAARSDQLDVGDYIKAVNGINLAKFRHDEIISLLKNVGERVVLEVEYELPPVSIQGSSVMFRTVEVTLHKEGNTFGFVIRGGAHDDRNKSRPVVITCVRPGGPADREGTIKPGDRLLSVDGIRLLGTTHAEAMSILKQCGQEATLLIEYDVSVMDSVATASGPLLVEVAKTPGASLGVALTTSVCCNKQVIVIDKIKSASIADRCGALHVGDHILSIDGTSMEYCTLAEATQFLANTTDQVKLEILPHHQTRLALKGPDHVKIQRSDRQLPWDPWASSQCSVHTNHHHNPHHPDHCRVPALGFPKALTPNSPPAMVSSSSPTSMSAYSLSSLNMGTLPRSLYSTSPRGTMMRRRLKKKDFKSSLSLASSTVGLAGQVVHTETTEVVLTADPVTGFGIQLQGSVFATETLSSPPLISYIEADSPAERCGVLQIGDRVMAINGIPTEDSTFEEANQLLRDSSITSKVTLEIEFDVAESVIPSSGTFHVKLPKKHSVELGITISSPSSRKPGDPLVISDIKKGSVAHRTGTLELGDKLLAIDNIRLDSCSMEDAVQILQQCEDLVKLKIRKDEDNSDEQESSGAIIYTVELKRYGGPLGITISGTEEPFDPIIISSLTKGGLAERTGAIHIGDRILAINSSSLKGKPLSEAIHLLQMAGETVTLKIKKQTDAQPASSPKKLPIPSHSSDLGDGEEDPSPIQRPGKLSDVYPSTVPSVDSAVDSWDGSGIDARYGSQGTTFQTSGYNFNTYDWRSPKKRASLSPVPKPRSQTYPDVGLSNEDWDRSTASGFAGASDSADAEQEENFWSQALEDLETCGQSGILRELEATIMSGSTMSLNHEAPTARSQLGRQASFQERSNSRPHYSQTTRSNTLPSDVGRKSVTLRKMKQEIKEIMSPTPVELHKVTLYKDSGMEDFGFSVADGLLEKGVYVKNIRPAGPGDLGGLKPYDRLLQVNHVRTRDFDCCLVVPLIAESGNKLDLVISRNPLASQKSIEQPALPSDWSEQNSAFFQQPSHGGNLETREPTNTL</sequence>
<name>GRIP1_RAT</name>
<accession>P97879</accession>
<keyword id="KW-0002">3D-structure</keyword>
<keyword id="KW-0025">Alternative splicing</keyword>
<keyword id="KW-1003">Cell membrane</keyword>
<keyword id="KW-0966">Cell projection</keyword>
<keyword id="KW-0963">Cytoplasm</keyword>
<keyword id="KW-0968">Cytoplasmic vesicle</keyword>
<keyword id="KW-0256">Endoplasmic reticulum</keyword>
<keyword id="KW-0472">Membrane</keyword>
<keyword id="KW-0597">Phosphoprotein</keyword>
<keyword id="KW-0628">Postsynaptic cell membrane</keyword>
<keyword id="KW-1185">Reference proteome</keyword>
<keyword id="KW-0677">Repeat</keyword>
<keyword id="KW-0770">Synapse</keyword>
<protein>
    <recommendedName>
        <fullName>Glutamate receptor-interacting protein 1</fullName>
        <shortName>GRIP-1</shortName>
    </recommendedName>
    <alternativeName>
        <fullName>AMPA receptor-interacting protein GRIP1</fullName>
    </alternativeName>
</protein>
<comment type="function">
    <text evidence="8 9">May play a role as a localized scaffold for the assembly of a multiprotein signaling complex and as mediator of the trafficking of its binding partners at specific subcellular location in neurons (PubMed:9069286). Through complex formation with NSG1, GRIA2 and STX12 controls the intracellular fate of AMPAR and the endosomal sorting of the GRIA2 subunit toward recycling and membrane targeting (PubMed:16037816).</text>
</comment>
<comment type="subunit">
    <text evidence="1 8">Interacts with EFNB1, EPHA7, EPHB2, EFNB3, KIF5A, KIF5C, KIF5B and the C-terminal tail of PRLHR. Forms a ternary complex with GRIA2 and CSPG4 (By similarity). Can form homomultimers or heteromultimers with GRIP2. Interacts with GRIA2, GRIA3, GRIPAP1/GRASP1, PPFIA1, PPFIA4, FRAS1, PLCD4, PTPRF and liprins-alpha. Interacts with ATAD1 in an ATP-dependent manner. ATAD1-catalyzed ATP hydrolysis disrupts binding to ATAD1 and to GRIA2 and leads to AMPAR complex disassembly. Interacts with SLC30A9 (By similarity). Interacts with BUD23 (By similarity). Forms a complex with NSG1, GRIA2 and STX12; controls the intracellular fate of AMPAR and the endosomal sorting of the GRIA2 subunit toward recycling and membrane targeting (PubMed:16037816). Interacts with NSG1 (PubMed:16037816).</text>
</comment>
<comment type="interaction">
    <interactant intactId="EBI-936113">
        <id>P97879</id>
    </interactant>
    <interactant intactId="EBI-4409108">
        <id>Q8CGU4</id>
        <label>Agap2</label>
    </interactant>
    <organismsDiffer>false</organismsDiffer>
    <experiments>4</experiments>
</comment>
<comment type="interaction">
    <interactant intactId="EBI-936113">
        <id>P97879</id>
    </interactant>
    <interactant intactId="EBI-77718">
        <id>P19491</id>
        <label>Gria2</label>
    </interactant>
    <organismsDiffer>false</organismsDiffer>
    <experiments>15</experiments>
</comment>
<comment type="interaction">
    <interactant intactId="EBI-936113">
        <id>P97879</id>
    </interactant>
    <interactant intactId="EBI-77764">
        <id>P19492</id>
        <label>Gria3</label>
    </interactant>
    <organismsDiffer>false</organismsDiffer>
    <experiments>3</experiments>
</comment>
<comment type="interaction">
    <interactant intactId="EBI-936113">
        <id>P97879</id>
    </interactant>
    <interactant intactId="EBI-7761834">
        <id>P19493</id>
        <label>Gria4</label>
    </interactant>
    <organismsDiffer>false</organismsDiffer>
    <experiments>3</experiments>
</comment>
<comment type="interaction">
    <interactant intactId="EBI-936113">
        <id>P97879</id>
    </interactant>
    <interactant intactId="EBI-936068">
        <id>Q9WTW1-3</id>
        <label>Grip2</label>
    </interactant>
    <organismsDiffer>false</organismsDiffer>
    <experiments>3</experiments>
</comment>
<comment type="interaction">
    <interactant intactId="EBI-936113">
        <id>P97879</id>
    </interactant>
    <interactant intactId="EBI-6936416">
        <id>P35400</id>
        <label>Grm7</label>
    </interactant>
    <organismsDiffer>false</organismsDiffer>
    <experiments>3</experiments>
</comment>
<comment type="interaction">
    <interactant intactId="EBI-936113">
        <id>P97879</id>
    </interactant>
    <interactant intactId="EBI-8276993">
        <id>Q91Z79</id>
        <label>Ppfia3</label>
    </interactant>
    <organismsDiffer>false</organismsDiffer>
    <experiments>3</experiments>
</comment>
<comment type="interaction">
    <interactant intactId="EBI-936113">
        <id>P97879</id>
    </interactant>
    <interactant intactId="EBI-8276907">
        <id>Q91Z80</id>
        <label>Ppfia4</label>
    </interactant>
    <organismsDiffer>false</organismsDiffer>
    <experiments>7</experiments>
</comment>
<comment type="interaction">
    <interactant intactId="EBI-936113">
        <id>P97879</id>
    </interactant>
    <interactant intactId="EBI-8277319">
        <id>Q9WUL3</id>
        <label>RPTPK</label>
    </interactant>
    <organismsDiffer>false</organismsDiffer>
    <experiments>2</experiments>
</comment>
<comment type="interaction">
    <interactant intactId="EBI-936113">
        <id>P97879</id>
    </interactant>
    <interactant intactId="EBI-745426">
        <id>Q13136</id>
        <label>PPFIA1</label>
    </interactant>
    <organismsDiffer>true</organismsDiffer>
    <experiments>4</experiments>
</comment>
<comment type="subcellular location">
    <subcellularLocation>
        <location evidence="4">Cytoplasmic vesicle</location>
    </subcellularLocation>
    <subcellularLocation>
        <location evidence="4">Perikaryon</location>
    </subcellularLocation>
    <subcellularLocation>
        <location evidence="4">Cell projection</location>
        <location evidence="4">Dendrite</location>
    </subcellularLocation>
    <subcellularLocation>
        <location evidence="4">Cytoplasm</location>
    </subcellularLocation>
    <subcellularLocation>
        <location>Endomembrane system</location>
        <topology>Peripheral membrane protein</topology>
    </subcellularLocation>
    <subcellularLocation>
        <location evidence="4">Postsynaptic cell membrane</location>
    </subcellularLocation>
    <subcellularLocation>
        <location evidence="4 7">Postsynaptic density</location>
    </subcellularLocation>
    <subcellularLocation>
        <location evidence="12">Endoplasmic reticulum membrane</location>
        <topology evidence="11">Peripheral membrane protein</topology>
    </subcellularLocation>
    <text evidence="4">Membrane-associated with vesicles, peri-Golgi complexes and endoplasmic reticulum. Enriched in postsynaptic plasma membrane and postsynaptic densities.</text>
</comment>
<comment type="alternative products">
    <event type="alternative splicing"/>
    <isoform>
        <id>P97879-1</id>
        <name>1</name>
        <sequence type="displayed"/>
    </isoform>
    <isoform>
        <id>P97879-2</id>
        <name>2</name>
        <name>GRIP1c4-7</name>
        <sequence type="described" ref="VSP_009751 VSP_009752 VSP_009753"/>
    </isoform>
</comment>
<comment type="tissue specificity">
    <text evidence="4 5 9">Expressed in brain, testis and retina. In brain highly expressed in the olfactory bulb, cortex and hippocampus and lower level in thalamus, cerebellum and spinal cord. In brain it is found in the perikaryon, dendrites, dendritic shafts, dendritic spines and, excitatory and inhibitory synapses of neurons. In retina, it is most abundant in the plexiform layers than in perikarya.</text>
</comment>
<comment type="developmental stage">
    <text evidence="4">Detected in early embryonic stage as early as 15 dpc, gradually increased throughout early development, peaked at approximately between postnatal days P6 and P8, then slightly decreased and remained relatively stable in the adult.</text>
</comment>
<comment type="domain">
    <text evidence="1 6">PDZ 6 mediates interaction with the PDZ recognition motif of EFNB1 and EPHB2 and with the C-terminus of PPFIA1 and PPFIA4. PDZ 4 and PDZ 5 mediate interaction with PRLHR (By similarity). PDZ 4 and PDZ 5 mediate interaction with the C-terminus of GRIA2 and GRIA3. PDZ 4, PDZ 5 and PDZ 6 mediate homomultimers. PDZ 7 mediates interaction with PDZ domain of GRASP1. PDZ 7 domain binds CSPG4. PDZ 6 mediates interaction with the C-terminus of liprins-alpha. PDZ 1, PDZ 2 and PDZ 3 mediate interaction with the PDZ-binding motif of FRAS1.</text>
</comment>